<keyword id="KW-0130">Cell adhesion</keyword>
<keyword id="KW-0998">Cell outer membrane</keyword>
<keyword id="KW-0281">Fimbrium</keyword>
<keyword id="KW-0449">Lipoprotein</keyword>
<keyword id="KW-0472">Membrane</keyword>
<keyword id="KW-0564">Palmitate</keyword>
<keyword id="KW-0732">Signal</keyword>
<keyword id="KW-0843">Virulence</keyword>
<organism>
    <name type="scientific">Porphyromonas gingivalis</name>
    <name type="common">Bacteroides gingivalis</name>
    <dbReference type="NCBI Taxonomy" id="837"/>
    <lineage>
        <taxon>Bacteria</taxon>
        <taxon>Pseudomonadati</taxon>
        <taxon>Bacteroidota</taxon>
        <taxon>Bacteroidia</taxon>
        <taxon>Bacteroidales</taxon>
        <taxon>Porphyromonadaceae</taxon>
        <taxon>Porphyromonas</taxon>
    </lineage>
</organism>
<comment type="function">
    <text evidence="5 6">Structural subunit of the major fimbriae (Probable). These long, filamentous pili are attached to the cell surface; they mediate biofilm formation, adhesion onto host cells and onto other bacteria that are part of the oral microbiome. They play an important role in the invasion of periodontal tissues. Fimbriae and their constituents are major virulence factors. FimA proteins from different strains have highly divergent sequences, and this has been used for classification. The sequence-based classification correlates with pathogenicity.</text>
</comment>
<comment type="subunit">
    <text evidence="1 2">Fimbriae are composed of a major, structural subunit (FimA) and the minor components FimC, FimD and FimE (By similarity). Head-to-tail oligomerization of FimA molecules mediates assembly of the fimbrium stalk, while the minor components probably form the fimbrium tip. Linear, head-to-tail oligomerization of FimA is mediated by a conformation change, facilitating the insertion of a C-terminal beta-strand into a groove in the N-terminal domain of the following subunit (By similarity).</text>
</comment>
<comment type="subcellular location">
    <subcellularLocation>
        <location evidence="1">Fimbrium</location>
    </subcellularLocation>
    <subcellularLocation>
        <location evidence="1">Cell outer membrane</location>
    </subcellularLocation>
    <text evidence="1">Synthesized as palmitoylated precursor. The lipidated propeptide is removed during processing to the mature protein.</text>
</comment>
<comment type="PTM">
    <text evidence="1">Synthesized as palmitoylated lipoprotein precursor. Efficient export to the outer membrane and integration into fimbriae requires lipidation and subsequent proteolytic removal of the lipidated propeptide.</text>
</comment>
<comment type="miscellaneous">
    <text evidence="6">The name (major fimbrium subunit) does not indicate the abundance of the protein, but is derived from the greater length of the major fimbriae. In strain ATCC 33277 and strain 381, major fimbriae are 300 - 1600 nM in length and about 5 nm in diameter. In contrast, minor fimbriae are only about 80 - 120 nm long. This length difference is observed only in a small number of strains, including strain ATCC 33277 and strain 381, and is due to a loss of function mutation in FimB, a protein that restricts fimbrial length in other strains.</text>
</comment>
<comment type="similarity">
    <text evidence="6">Belongs to the bacteroidetes fimbrillin superfamily. FimA/Mfa1 family.</text>
</comment>
<comment type="sequence caution" evidence="6">
    <conflict type="erroneous initiation">
        <sequence resource="EMBL-CDS" id="BAA86887"/>
    </conflict>
    <text>Truncated N-terminus.</text>
</comment>
<evidence type="ECO:0000250" key="1">
    <source>
        <dbReference type="UniProtKB" id="B2RH54"/>
    </source>
</evidence>
<evidence type="ECO:0000250" key="2">
    <source>
        <dbReference type="UniProtKB" id="P59914"/>
    </source>
</evidence>
<evidence type="ECO:0000255" key="3"/>
<evidence type="ECO:0000255" key="4">
    <source>
        <dbReference type="PROSITE-ProRule" id="PRU00303"/>
    </source>
</evidence>
<evidence type="ECO:0000269" key="5">
    <source>
    </source>
</evidence>
<evidence type="ECO:0000305" key="6"/>
<reference key="1">
    <citation type="journal article" date="2000" name="J. Clin. Microbiol.">
        <title>Distribution and molecular characterization of Porphyromonas gingivalis carrying a new type of fimA gene.</title>
        <authorList>
            <person name="Nakagawa I."/>
            <person name="Amano A."/>
            <person name="Kimura R.K."/>
            <person name="Nakamura T."/>
            <person name="Kawabata S."/>
            <person name="Hamada S."/>
        </authorList>
    </citation>
    <scope>NUCLEOTIDE SEQUENCE [GENOMIC DNA]</scope>
    <scope>CLASSIFICATION INTO TYPES</scope>
    <source>
        <strain>HNA-99</strain>
    </source>
</reference>
<reference key="2">
    <citation type="journal article" date="2002" name="Infect. Immun.">
        <title>Functional differences among FimA variants of Porphyromonas gingivalis and their effects on adhesion to and invasion of human epithelial cells.</title>
        <authorList>
            <person name="Nakagawa I."/>
            <person name="Amano A."/>
            <person name="Kuboniwa M."/>
            <person name="Nakamura T."/>
            <person name="Kawabata S."/>
            <person name="Hamada S."/>
        </authorList>
    </citation>
    <scope>FUNCTION</scope>
</reference>
<dbReference type="EMBL" id="AB027294">
    <property type="protein sequence ID" value="BAA86887.1"/>
    <property type="status" value="ALT_INIT"/>
    <property type="molecule type" value="Genomic_DNA"/>
</dbReference>
<dbReference type="SMR" id="Q9S0W8"/>
<dbReference type="GO" id="GO:0009279">
    <property type="term" value="C:cell outer membrane"/>
    <property type="evidence" value="ECO:0007669"/>
    <property type="project" value="UniProtKB-SubCell"/>
</dbReference>
<dbReference type="GO" id="GO:0009289">
    <property type="term" value="C:pilus"/>
    <property type="evidence" value="ECO:0000250"/>
    <property type="project" value="UniProtKB"/>
</dbReference>
<dbReference type="GO" id="GO:0005198">
    <property type="term" value="F:structural molecule activity"/>
    <property type="evidence" value="ECO:0007669"/>
    <property type="project" value="InterPro"/>
</dbReference>
<dbReference type="GO" id="GO:0007155">
    <property type="term" value="P:cell adhesion"/>
    <property type="evidence" value="ECO:0007669"/>
    <property type="project" value="UniProtKB-KW"/>
</dbReference>
<dbReference type="Gene3D" id="2.60.40.3690">
    <property type="match status" value="1"/>
</dbReference>
<dbReference type="InterPro" id="IPR053878">
    <property type="entry name" value="FimA_C"/>
</dbReference>
<dbReference type="InterPro" id="IPR029141">
    <property type="entry name" value="FimA_N"/>
</dbReference>
<dbReference type="InterPro" id="IPR008110">
    <property type="entry name" value="Fimbrillin"/>
</dbReference>
<dbReference type="Pfam" id="PF22492">
    <property type="entry name" value="FimA4_C"/>
    <property type="match status" value="1"/>
</dbReference>
<dbReference type="Pfam" id="PF06321">
    <property type="entry name" value="P_gingi_FimA"/>
    <property type="match status" value="1"/>
</dbReference>
<dbReference type="PRINTS" id="PR01737">
    <property type="entry name" value="FIMBRILLIN"/>
</dbReference>
<dbReference type="PROSITE" id="PS51257">
    <property type="entry name" value="PROKAR_LIPOPROTEIN"/>
    <property type="match status" value="1"/>
</dbReference>
<gene>
    <name type="primary">fimA</name>
</gene>
<sequence length="395" mass="42790">MKKTKFFLLGLAALAMTACNKDNEAEPIVETDATVSFIIKAGSPQRETEPNSLLDSDAKITKLTAMVYAGQVQEGIKTVEDADNVLKVEGIKCKSGANKVLVVVANYDKNAGGDAIDFTGKTLDQVKAMTIQLTQDNQSAKFLIMTGESNAFTIKPGTNYYGYPAGTGTTQDNLIETGNALKVTRVHAAMSIQNVTVTFDPQYSSNYYFKPQNVAGLICKKQSKIFGASLDFGTDYLGGVATTAAAYTPTSYDNSVSWLTKPYAAKAGFYIMESVYQVGNNLRPTILCVYGKLKKTETQDFSQEELDAAVAAGYCDGNAITYYPVLVNYNGYGYTYTGENTGLNKILRNNHYKISLTVKGPGTNTPEGPLPEEANLNVNCEVVSWNVVNQSAIWN</sequence>
<proteinExistence type="inferred from homology"/>
<name>FIMA5_PORGN</name>
<protein>
    <recommendedName>
        <fullName>Major fimbrium subunit FimA type-5</fullName>
    </recommendedName>
    <alternativeName>
        <fullName>Fimbrillin</fullName>
        <shortName>Fimbrilin</shortName>
    </alternativeName>
    <alternativeName>
        <fullName>Major fimbrial subunit protein type V</fullName>
    </alternativeName>
</protein>
<accession>Q9S0W8</accession>
<feature type="signal peptide" evidence="4">
    <location>
        <begin position="1"/>
        <end position="18"/>
    </location>
</feature>
<feature type="propeptide" id="PRO_0000009168" evidence="3">
    <location>
        <begin position="19"/>
        <end position="40"/>
    </location>
</feature>
<feature type="chain" id="PRO_0000009169" description="Major fimbrium subunit FimA type-5">
    <location>
        <begin position="41"/>
        <end position="395"/>
    </location>
</feature>
<feature type="region of interest" description="Important for oligomerization and fimbrium assembly" evidence="2">
    <location>
        <begin position="385"/>
        <end position="394"/>
    </location>
</feature>
<feature type="lipid moiety-binding region" description="N-palmitoyl cysteine" evidence="4">
    <location>
        <position position="19"/>
    </location>
</feature>
<feature type="lipid moiety-binding region" description="S-diacylglycerol cysteine" evidence="4">
    <location>
        <position position="19"/>
    </location>
</feature>